<protein>
    <recommendedName>
        <fullName evidence="1">Plasma membrane ascorbate-dependent reductase CYBRD1</fullName>
        <ecNumber evidence="1">7.2.1.3</ecNumber>
    </recommendedName>
    <alternativeName>
        <fullName>Cytochrome b reductase 1</fullName>
    </alternativeName>
</protein>
<gene>
    <name type="primary">cybrd1</name>
</gene>
<reference key="1">
    <citation type="submission" date="2004-07" db="EMBL/GenBank/DDBJ databases">
        <authorList>
            <consortium name="NIH - Xenopus Gene Collection (XGC) project"/>
        </authorList>
    </citation>
    <scope>NUCLEOTIDE SEQUENCE [LARGE SCALE MRNA]</scope>
    <source>
        <tissue>Embryo</tissue>
        <tissue>Spleen</tissue>
    </source>
</reference>
<keyword id="KW-1003">Cell membrane</keyword>
<keyword id="KW-0249">Electron transport</keyword>
<keyword id="KW-0349">Heme</keyword>
<keyword id="KW-0408">Iron</keyword>
<keyword id="KW-0472">Membrane</keyword>
<keyword id="KW-0479">Metal-binding</keyword>
<keyword id="KW-0560">Oxidoreductase</keyword>
<keyword id="KW-1185">Reference proteome</keyword>
<keyword id="KW-1278">Translocase</keyword>
<keyword id="KW-0812">Transmembrane</keyword>
<keyword id="KW-1133">Transmembrane helix</keyword>
<keyword id="KW-0813">Transport</keyword>
<name>CYBR1_XENLA</name>
<feature type="chain" id="PRO_0000314835" description="Plasma membrane ascorbate-dependent reductase CYBRD1">
    <location>
        <begin position="1"/>
        <end position="283"/>
    </location>
</feature>
<feature type="topological domain" description="Cytoplasmic" evidence="1">
    <location>
        <begin position="1"/>
        <end position="5"/>
    </location>
</feature>
<feature type="transmembrane region" description="Helical; Name=1" evidence="1">
    <location>
        <begin position="6"/>
        <end position="30"/>
    </location>
</feature>
<feature type="topological domain" description="Extracellular" evidence="1">
    <location>
        <begin position="31"/>
        <end position="45"/>
    </location>
</feature>
<feature type="transmembrane region" description="Helical; Name=2" evidence="1">
    <location>
        <begin position="46"/>
        <end position="67"/>
    </location>
</feature>
<feature type="topological domain" description="Cytoplasmic" evidence="1">
    <location>
        <begin position="68"/>
        <end position="76"/>
    </location>
</feature>
<feature type="transmembrane region" description="Helical; Name=3" evidence="1">
    <location>
        <begin position="77"/>
        <end position="103"/>
    </location>
</feature>
<feature type="topological domain" description="Extracellular" evidence="1">
    <location>
        <begin position="104"/>
        <end position="116"/>
    </location>
</feature>
<feature type="transmembrane region" description="Helical; Name=4" evidence="1">
    <location>
        <begin position="117"/>
        <end position="142"/>
    </location>
</feature>
<feature type="topological domain" description="Cytoplasmic" evidence="1">
    <location>
        <begin position="143"/>
        <end position="149"/>
    </location>
</feature>
<feature type="transmembrane region" description="Helical; Name=5" evidence="1">
    <location>
        <begin position="150"/>
        <end position="177"/>
    </location>
</feature>
<feature type="topological domain" description="Extracellular" evidence="1">
    <location>
        <begin position="178"/>
        <end position="195"/>
    </location>
</feature>
<feature type="transmembrane region" description="Helical; Name=6" evidence="1">
    <location>
        <begin position="196"/>
        <end position="220"/>
    </location>
</feature>
<feature type="topological domain" description="Cytoplasmic" evidence="1">
    <location>
        <begin position="221"/>
        <end position="283"/>
    </location>
</feature>
<feature type="domain" description="Cytochrome b561" evidence="3">
    <location>
        <begin position="13"/>
        <end position="218"/>
    </location>
</feature>
<feature type="region of interest" description="Disordered" evidence="4">
    <location>
        <begin position="234"/>
        <end position="262"/>
    </location>
</feature>
<feature type="compositionally biased region" description="Polar residues" evidence="4">
    <location>
        <begin position="235"/>
        <end position="253"/>
    </location>
</feature>
<feature type="binding site" description="axial binding residue" evidence="1">
    <location>
        <position position="48"/>
    </location>
    <ligand>
        <name>heme b</name>
        <dbReference type="ChEBI" id="CHEBI:60344"/>
        <label>1</label>
    </ligand>
    <ligandPart>
        <name>Fe</name>
        <dbReference type="ChEBI" id="CHEBI:18248"/>
    </ligandPart>
</feature>
<feature type="binding site" evidence="1">
    <location>
        <position position="68"/>
    </location>
    <ligand>
        <name>heme b</name>
        <dbReference type="ChEBI" id="CHEBI:60344"/>
        <label>2</label>
    </ligand>
</feature>
<feature type="binding site" evidence="1">
    <location>
        <position position="77"/>
    </location>
    <ligand>
        <name>heme b</name>
        <dbReference type="ChEBI" id="CHEBI:60344"/>
        <label>2</label>
    </ligand>
</feature>
<feature type="binding site" evidence="1">
    <location>
        <position position="77"/>
    </location>
    <ligand>
        <name>L-ascorbate</name>
        <dbReference type="ChEBI" id="CHEBI:38290"/>
    </ligand>
</feature>
<feature type="binding site" evidence="1">
    <location>
        <position position="81"/>
    </location>
    <ligand>
        <name>L-ascorbate</name>
        <dbReference type="ChEBI" id="CHEBI:38290"/>
    </ligand>
</feature>
<feature type="binding site" description="axial binding residue" evidence="1">
    <location>
        <position position="84"/>
    </location>
    <ligand>
        <name>heme b</name>
        <dbReference type="ChEBI" id="CHEBI:60344"/>
        <label>2</label>
    </ligand>
    <ligandPart>
        <name>Fe</name>
        <dbReference type="ChEBI" id="CHEBI:18248"/>
    </ligandPart>
</feature>
<feature type="binding site" evidence="1">
    <location>
        <position position="106"/>
    </location>
    <ligand>
        <name>Fe(3+)</name>
        <dbReference type="ChEBI" id="CHEBI:29034"/>
        <note>substrate</note>
    </ligand>
</feature>
<feature type="binding site" evidence="1">
    <location>
        <begin position="113"/>
        <end position="116"/>
    </location>
    <ligand>
        <name>heme b</name>
        <dbReference type="ChEBI" id="CHEBI:60344"/>
        <label>1</label>
    </ligand>
</feature>
<feature type="binding site" description="axial binding residue" evidence="1">
    <location>
        <position position="118"/>
    </location>
    <ligand>
        <name>heme b</name>
        <dbReference type="ChEBI" id="CHEBI:60344"/>
        <label>1</label>
    </ligand>
    <ligandPart>
        <name>Fe</name>
        <dbReference type="ChEBI" id="CHEBI:18248"/>
    </ligandPart>
</feature>
<feature type="binding site" evidence="1">
    <location>
        <position position="150"/>
    </location>
    <ligand>
        <name>L-ascorbate</name>
        <dbReference type="ChEBI" id="CHEBI:38290"/>
    </ligand>
</feature>
<feature type="binding site" description="axial binding residue" evidence="1">
    <location>
        <position position="157"/>
    </location>
    <ligand>
        <name>heme b</name>
        <dbReference type="ChEBI" id="CHEBI:60344"/>
        <label>2</label>
    </ligand>
    <ligandPart>
        <name>Fe</name>
        <dbReference type="ChEBI" id="CHEBI:18248"/>
    </ligandPart>
</feature>
<feature type="binding site" evidence="1">
    <location>
        <position position="178"/>
    </location>
    <ligand>
        <name>heme b</name>
        <dbReference type="ChEBI" id="CHEBI:60344"/>
        <label>1</label>
    </ligand>
</feature>
<feature type="binding site" evidence="1">
    <location>
        <position position="223"/>
    </location>
    <ligand>
        <name>heme b</name>
        <dbReference type="ChEBI" id="CHEBI:60344"/>
        <label>2</label>
    </ligand>
</feature>
<comment type="function">
    <text evidence="1 2">Plasma membrane reductase that uses cytoplasmic ascorbate as an electron donor to reduce extracellular Fe(3+) into Fe(2+). It is also able to reduce extracellular monodehydro-L-ascorbate and may be involved in extracellular ascorbate regeneration (By similarity). May also function as a cupric transmembrane reductase (By similarity).</text>
</comment>
<comment type="catalytic activity">
    <reaction evidence="1">
        <text>Fe(3+)(out) + L-ascorbate(in) = monodehydro-L-ascorbate radical(in) + Fe(2+)(out) + H(+)</text>
        <dbReference type="Rhea" id="RHEA:30403"/>
        <dbReference type="ChEBI" id="CHEBI:15378"/>
        <dbReference type="ChEBI" id="CHEBI:29033"/>
        <dbReference type="ChEBI" id="CHEBI:29034"/>
        <dbReference type="ChEBI" id="CHEBI:38290"/>
        <dbReference type="ChEBI" id="CHEBI:59513"/>
        <dbReference type="EC" id="7.2.1.3"/>
    </reaction>
    <physiologicalReaction direction="left-to-right" evidence="1">
        <dbReference type="Rhea" id="RHEA:30404"/>
    </physiologicalReaction>
</comment>
<comment type="catalytic activity">
    <reaction evidence="2">
        <text>Cu(2+)(out) + L-ascorbate(in) = Cu(+)(out) + monodehydro-L-ascorbate radical(in) + H(+)</text>
        <dbReference type="Rhea" id="RHEA:66656"/>
        <dbReference type="ChEBI" id="CHEBI:15378"/>
        <dbReference type="ChEBI" id="CHEBI:29036"/>
        <dbReference type="ChEBI" id="CHEBI:38290"/>
        <dbReference type="ChEBI" id="CHEBI:49552"/>
        <dbReference type="ChEBI" id="CHEBI:59513"/>
    </reaction>
    <physiologicalReaction direction="left-to-right" evidence="2">
        <dbReference type="Rhea" id="RHEA:66657"/>
    </physiologicalReaction>
</comment>
<comment type="catalytic activity">
    <reaction evidence="1">
        <text>monodehydro-L-ascorbate radical(out) + L-ascorbate(in) = monodehydro-L-ascorbate radical(in) + L-ascorbate(out)</text>
        <dbReference type="Rhea" id="RHEA:66524"/>
        <dbReference type="ChEBI" id="CHEBI:38290"/>
        <dbReference type="ChEBI" id="CHEBI:59513"/>
    </reaction>
    <physiologicalReaction direction="left-to-right" evidence="1">
        <dbReference type="Rhea" id="RHEA:66525"/>
    </physiologicalReaction>
</comment>
<comment type="cofactor">
    <cofactor evidence="1">
        <name>heme b</name>
        <dbReference type="ChEBI" id="CHEBI:60344"/>
    </cofactor>
    <text evidence="1">Binds 2 heme b groups non-covalently.</text>
</comment>
<comment type="subunit">
    <text evidence="1">Homodimer.</text>
</comment>
<comment type="subcellular location">
    <subcellularLocation>
        <location evidence="1">Cell membrane</location>
        <topology evidence="1">Multi-pass membrane protein</topology>
    </subcellularLocation>
    <subcellularLocation>
        <location evidence="1">Apical cell membrane</location>
        <topology evidence="1">Multi-pass membrane protein</topology>
    </subcellularLocation>
</comment>
<comment type="sequence caution" evidence="5">
    <conflict type="erroneous initiation">
        <sequence resource="EMBL-CDS" id="AAH77470"/>
    </conflict>
</comment>
<proteinExistence type="evidence at transcript level"/>
<sequence>MEGYKSFLAFLVSSLLLGFLGVIFTLVWVLHWREGLGWDGGAAEFNWHPVLVTSGFIFIQGIAIIVYRLPWTWKCSKLLMKFIHAGLHLTALIFTIVALVAVFDFHNAKNIPNMYSLHSWIGLTVVILYALQLVLGVSIYLLPFASNTLRAALMPVHVYSGLFIFGTVIATALMGITEKLIFSLKEPPYSKLPPEAIFVNTFGLLILVFGGLVVWMVTTPAWKRPREQGMEILSPTVSSPDETEEGSTITDCSNTEKSDVELNSEAARKRILKLDEAGQRSTM</sequence>
<organism>
    <name type="scientific">Xenopus laevis</name>
    <name type="common">African clawed frog</name>
    <dbReference type="NCBI Taxonomy" id="8355"/>
    <lineage>
        <taxon>Eukaryota</taxon>
        <taxon>Metazoa</taxon>
        <taxon>Chordata</taxon>
        <taxon>Craniata</taxon>
        <taxon>Vertebrata</taxon>
        <taxon>Euteleostomi</taxon>
        <taxon>Amphibia</taxon>
        <taxon>Batrachia</taxon>
        <taxon>Anura</taxon>
        <taxon>Pipoidea</taxon>
        <taxon>Pipidae</taxon>
        <taxon>Xenopodinae</taxon>
        <taxon>Xenopus</taxon>
        <taxon>Xenopus</taxon>
    </lineage>
</organism>
<evidence type="ECO:0000250" key="1">
    <source>
        <dbReference type="UniProtKB" id="Q53TN4"/>
    </source>
</evidence>
<evidence type="ECO:0000250" key="2">
    <source>
        <dbReference type="UniProtKB" id="Q925G2"/>
    </source>
</evidence>
<evidence type="ECO:0000255" key="3">
    <source>
        <dbReference type="PROSITE-ProRule" id="PRU00242"/>
    </source>
</evidence>
<evidence type="ECO:0000256" key="4">
    <source>
        <dbReference type="SAM" id="MobiDB-lite"/>
    </source>
</evidence>
<evidence type="ECO:0000305" key="5"/>
<accession>Q6DDR3</accession>
<accession>Q6DCI4</accession>
<dbReference type="EC" id="7.2.1.3" evidence="1"/>
<dbReference type="EMBL" id="BC077470">
    <property type="protein sequence ID" value="AAH77470.1"/>
    <property type="status" value="ALT_INIT"/>
    <property type="molecule type" value="mRNA"/>
</dbReference>
<dbReference type="EMBL" id="BC078045">
    <property type="protein sequence ID" value="AAH78045.1"/>
    <property type="molecule type" value="mRNA"/>
</dbReference>
<dbReference type="RefSeq" id="NP_001086436.1">
    <property type="nucleotide sequence ID" value="NM_001092967.1"/>
</dbReference>
<dbReference type="SMR" id="Q6DDR3"/>
<dbReference type="DNASU" id="445864"/>
<dbReference type="GeneID" id="445864"/>
<dbReference type="KEGG" id="xla:445864"/>
<dbReference type="AGR" id="Xenbase:XB-GENE-1011692"/>
<dbReference type="CTD" id="445864"/>
<dbReference type="Xenbase" id="XB-GENE-1011692">
    <property type="gene designation" value="cybrd1.L"/>
</dbReference>
<dbReference type="OrthoDB" id="907479at2759"/>
<dbReference type="Proteomes" id="UP000186698">
    <property type="component" value="Chromosome 9_10L"/>
</dbReference>
<dbReference type="Bgee" id="445864">
    <property type="expression patterns" value="Expressed in spleen and 19 other cell types or tissues"/>
</dbReference>
<dbReference type="GO" id="GO:0016324">
    <property type="term" value="C:apical plasma membrane"/>
    <property type="evidence" value="ECO:0000250"/>
    <property type="project" value="UniProtKB"/>
</dbReference>
<dbReference type="GO" id="GO:0031526">
    <property type="term" value="C:brush border membrane"/>
    <property type="evidence" value="ECO:0000250"/>
    <property type="project" value="UniProtKB"/>
</dbReference>
<dbReference type="GO" id="GO:0005765">
    <property type="term" value="C:lysosomal membrane"/>
    <property type="evidence" value="ECO:0000318"/>
    <property type="project" value="GO_Central"/>
</dbReference>
<dbReference type="GO" id="GO:0016020">
    <property type="term" value="C:membrane"/>
    <property type="evidence" value="ECO:0000250"/>
    <property type="project" value="UniProtKB"/>
</dbReference>
<dbReference type="GO" id="GO:0042802">
    <property type="term" value="F:identical protein binding"/>
    <property type="evidence" value="ECO:0000250"/>
    <property type="project" value="UniProtKB"/>
</dbReference>
<dbReference type="GO" id="GO:0046872">
    <property type="term" value="F:metal ion binding"/>
    <property type="evidence" value="ECO:0007669"/>
    <property type="project" value="UniProtKB-KW"/>
</dbReference>
<dbReference type="GO" id="GO:0016491">
    <property type="term" value="F:oxidoreductase activity"/>
    <property type="evidence" value="ECO:0000318"/>
    <property type="project" value="GO_Central"/>
</dbReference>
<dbReference type="GO" id="GO:0140571">
    <property type="term" value="F:transmembrane ascorbate ferrireductase activity"/>
    <property type="evidence" value="ECO:0000250"/>
    <property type="project" value="UniProtKB"/>
</dbReference>
<dbReference type="GO" id="GO:0140575">
    <property type="term" value="F:transmembrane monodehydroascorbate reductase activity"/>
    <property type="evidence" value="ECO:0000250"/>
    <property type="project" value="UniProtKB"/>
</dbReference>
<dbReference type="GO" id="GO:0140576">
    <property type="term" value="P:ascorbate homeostasis"/>
    <property type="evidence" value="ECO:0000250"/>
    <property type="project" value="UniProtKB"/>
</dbReference>
<dbReference type="GO" id="GO:0060586">
    <property type="term" value="P:multicellular organismal-level iron ion homeostasis"/>
    <property type="evidence" value="ECO:0000250"/>
    <property type="project" value="UniProtKB"/>
</dbReference>
<dbReference type="CDD" id="cd08765">
    <property type="entry name" value="Cyt_b561_CYBRD1"/>
    <property type="match status" value="1"/>
</dbReference>
<dbReference type="FunFam" id="1.20.120.1770:FF:000001">
    <property type="entry name" value="Cytochrome b reductase 1"/>
    <property type="match status" value="1"/>
</dbReference>
<dbReference type="Gene3D" id="1.20.120.1770">
    <property type="match status" value="1"/>
</dbReference>
<dbReference type="InterPro" id="IPR043205">
    <property type="entry name" value="CYB561/CYBRD1-like"/>
</dbReference>
<dbReference type="InterPro" id="IPR006593">
    <property type="entry name" value="Cyt_b561/ferric_Rdtase_TM"/>
</dbReference>
<dbReference type="PANTHER" id="PTHR10106">
    <property type="entry name" value="CYTOCHROME B561-RELATED"/>
    <property type="match status" value="1"/>
</dbReference>
<dbReference type="PANTHER" id="PTHR10106:SF12">
    <property type="entry name" value="PLASMA MEMBRANE ASCORBATE-DEPENDENT REDUCTASE CYBRD1"/>
    <property type="match status" value="1"/>
</dbReference>
<dbReference type="Pfam" id="PF03188">
    <property type="entry name" value="Cytochrom_B561"/>
    <property type="match status" value="1"/>
</dbReference>
<dbReference type="SMART" id="SM00665">
    <property type="entry name" value="B561"/>
    <property type="match status" value="1"/>
</dbReference>
<dbReference type="PROSITE" id="PS50939">
    <property type="entry name" value="CYTOCHROME_B561"/>
    <property type="match status" value="1"/>
</dbReference>